<dbReference type="EMBL" id="AE016819">
    <property type="protein sequence ID" value="AAS53967.1"/>
    <property type="molecule type" value="Genomic_DNA"/>
</dbReference>
<dbReference type="RefSeq" id="NP_986143.1">
    <property type="nucleotide sequence ID" value="NM_212279.1"/>
</dbReference>
<dbReference type="SMR" id="Q752H7"/>
<dbReference type="FunCoup" id="Q752H7">
    <property type="interactions" value="1034"/>
</dbReference>
<dbReference type="STRING" id="284811.Q752H7"/>
<dbReference type="EnsemblFungi" id="AAS53967">
    <property type="protein sequence ID" value="AAS53967"/>
    <property type="gene ID" value="AGOS_AFR596W"/>
</dbReference>
<dbReference type="GeneID" id="4622426"/>
<dbReference type="KEGG" id="ago:AGOS_AFR596W"/>
<dbReference type="eggNOG" id="KOG1373">
    <property type="taxonomic scope" value="Eukaryota"/>
</dbReference>
<dbReference type="HOGENOM" id="CLU_031763_2_1_1"/>
<dbReference type="InParanoid" id="Q752H7"/>
<dbReference type="OMA" id="PMMRQMF"/>
<dbReference type="OrthoDB" id="420669at2759"/>
<dbReference type="Proteomes" id="UP000000591">
    <property type="component" value="Chromosome VI"/>
</dbReference>
<dbReference type="GO" id="GO:0000324">
    <property type="term" value="C:fungal-type vacuole"/>
    <property type="evidence" value="ECO:0007669"/>
    <property type="project" value="EnsemblFungi"/>
</dbReference>
<dbReference type="GO" id="GO:0005784">
    <property type="term" value="C:Sec61 translocon complex"/>
    <property type="evidence" value="ECO:0000318"/>
    <property type="project" value="GO_Central"/>
</dbReference>
<dbReference type="GO" id="GO:1904680">
    <property type="term" value="F:peptide transmembrane transporter activity"/>
    <property type="evidence" value="ECO:0007669"/>
    <property type="project" value="EnsemblFungi"/>
</dbReference>
<dbReference type="GO" id="GO:0008320">
    <property type="term" value="F:protein transmembrane transporter activity"/>
    <property type="evidence" value="ECO:0000318"/>
    <property type="project" value="GO_Central"/>
</dbReference>
<dbReference type="GO" id="GO:0015450">
    <property type="term" value="F:protein-transporting ATPase activity"/>
    <property type="evidence" value="ECO:0007669"/>
    <property type="project" value="EnsemblFungi"/>
</dbReference>
<dbReference type="GO" id="GO:0043022">
    <property type="term" value="F:ribosome binding"/>
    <property type="evidence" value="ECO:0000318"/>
    <property type="project" value="GO_Central"/>
</dbReference>
<dbReference type="GO" id="GO:0005048">
    <property type="term" value="F:signal sequence binding"/>
    <property type="evidence" value="ECO:0000318"/>
    <property type="project" value="GO_Central"/>
</dbReference>
<dbReference type="GO" id="GO:0070843">
    <property type="term" value="P:misfolded protein transport"/>
    <property type="evidence" value="ECO:0007669"/>
    <property type="project" value="EnsemblFungi"/>
</dbReference>
<dbReference type="GO" id="GO:0031204">
    <property type="term" value="P:post-translational protein targeting to membrane, translocation"/>
    <property type="evidence" value="ECO:0000318"/>
    <property type="project" value="GO_Central"/>
</dbReference>
<dbReference type="GO" id="GO:0030970">
    <property type="term" value="P:retrograde protein transport, ER to cytosol"/>
    <property type="evidence" value="ECO:0007669"/>
    <property type="project" value="EnsemblFungi"/>
</dbReference>
<dbReference type="GO" id="GO:0006616">
    <property type="term" value="P:SRP-dependent cotranslational protein targeting to membrane, translocation"/>
    <property type="evidence" value="ECO:0000318"/>
    <property type="project" value="GO_Central"/>
</dbReference>
<dbReference type="FunFam" id="1.10.3370.10:FF:000002">
    <property type="entry name" value="Transport Sec61 subunit alpha isoform 2"/>
    <property type="match status" value="1"/>
</dbReference>
<dbReference type="Gene3D" id="1.10.3370.10">
    <property type="entry name" value="SecY subunit domain"/>
    <property type="match status" value="1"/>
</dbReference>
<dbReference type="InterPro" id="IPR002208">
    <property type="entry name" value="SecY/SEC61-alpha"/>
</dbReference>
<dbReference type="InterPro" id="IPR030659">
    <property type="entry name" value="SecY_CS"/>
</dbReference>
<dbReference type="InterPro" id="IPR023201">
    <property type="entry name" value="SecY_dom_sf"/>
</dbReference>
<dbReference type="InterPro" id="IPR019561">
    <property type="entry name" value="Translocon_Sec61/SecY_plug_dom"/>
</dbReference>
<dbReference type="NCBIfam" id="TIGR00967">
    <property type="entry name" value="3a0501s007"/>
    <property type="match status" value="1"/>
</dbReference>
<dbReference type="NCBIfam" id="NF006341">
    <property type="entry name" value="PRK08568.1-5"/>
    <property type="match status" value="1"/>
</dbReference>
<dbReference type="PANTHER" id="PTHR10906">
    <property type="entry name" value="SECY/SEC61-ALPHA FAMILY MEMBER"/>
    <property type="match status" value="1"/>
</dbReference>
<dbReference type="Pfam" id="PF10559">
    <property type="entry name" value="Plug_translocon"/>
    <property type="match status" value="1"/>
</dbReference>
<dbReference type="Pfam" id="PF00344">
    <property type="entry name" value="SecY"/>
    <property type="match status" value="1"/>
</dbReference>
<dbReference type="PIRSF" id="PIRSF004557">
    <property type="entry name" value="SecY"/>
    <property type="match status" value="1"/>
</dbReference>
<dbReference type="SUPFAM" id="SSF103491">
    <property type="entry name" value="Preprotein translocase SecY subunit"/>
    <property type="match status" value="1"/>
</dbReference>
<dbReference type="PROSITE" id="PS00755">
    <property type="entry name" value="SECY_1"/>
    <property type="match status" value="1"/>
</dbReference>
<protein>
    <recommendedName>
        <fullName>Protein transport protein SEC61 subunit alpha</fullName>
    </recommendedName>
</protein>
<sequence>MSGRLLDLFKPFEAFLPEVIAPERKVPYNQKLIWTAVSLLIFLVLGQIPLYGIVSSEGSDPLQWLRAMLASNRGTLMELGVSPIITSSMIFQFLQGTQLLQVNLESKQDRELFQIAQKVCAIVLTLGQAIVVVLTGNYGSVSNLGIAISLLLILQLVFASFIVLLLDELLIKGYGLGSGISLFTATNIAEQIFWKAFAPTTVNNGRGTEFEGAVVALFHLLSVRKDKKRALVEAFYRDYLPNMFQVLSTVFVFLFVLYLQGFRYELPVRSTRTRGQVGSYPIKLFYTSNTPIMLQSALTSNIFLTSQLLYQKFPNNPIVKMLGVWGTRSDAPYSPNAAISGLSYYIQPPFSFTEALLDPIKTVVYVTFVLGACAMFSRTWIDVSGTSPRDVSKQFKEQGLVINGRRETSVYRELKKVIPTAAAFGGATIGALSVGSDLLGTLGSGTSILMATTTIYGYYETAAKEGGFAKNLVAGFSEML</sequence>
<organism>
    <name type="scientific">Eremothecium gossypii (strain ATCC 10895 / CBS 109.51 / FGSC 9923 / NRRL Y-1056)</name>
    <name type="common">Yeast</name>
    <name type="synonym">Ashbya gossypii</name>
    <dbReference type="NCBI Taxonomy" id="284811"/>
    <lineage>
        <taxon>Eukaryota</taxon>
        <taxon>Fungi</taxon>
        <taxon>Dikarya</taxon>
        <taxon>Ascomycota</taxon>
        <taxon>Saccharomycotina</taxon>
        <taxon>Saccharomycetes</taxon>
        <taxon>Saccharomycetales</taxon>
        <taxon>Saccharomycetaceae</taxon>
        <taxon>Eremothecium</taxon>
    </lineage>
</organism>
<gene>
    <name type="primary">SEC61</name>
    <name type="ordered locus">AFR596W</name>
</gene>
<keyword id="KW-0256">Endoplasmic reticulum</keyword>
<keyword id="KW-0472">Membrane</keyword>
<keyword id="KW-0653">Protein transport</keyword>
<keyword id="KW-1185">Reference proteome</keyword>
<keyword id="KW-0811">Translocation</keyword>
<keyword id="KW-0812">Transmembrane</keyword>
<keyword id="KW-1133">Transmembrane helix</keyword>
<keyword id="KW-0813">Transport</keyword>
<name>SC61A_EREGS</name>
<comment type="function">
    <text evidence="1">Appears to play a crucial role in the insertion of secretory and membrane polypeptides into the ER. It is required for assembly of membrane and secretory proteins and is essential for cell growth. It interacts with other membrane proteins required for protein translocation. Upon binding to SEC62/63 complex, secretory precursor polypeptides may engage SEC61 to begin membrane penetration event. A cycle of assembly and disassembly of SEC62/63 from SEC61 may govern the activity of the translocase (By similarity).</text>
</comment>
<comment type="subunit">
    <text evidence="1">Heterotrimeric complex composed of SEC61-alpha, SEC61-beta and SEC61-gamma.</text>
</comment>
<comment type="subcellular location">
    <subcellularLocation>
        <location>Endoplasmic reticulum membrane</location>
        <topology>Multi-pass membrane protein</topology>
    </subcellularLocation>
</comment>
<comment type="similarity">
    <text evidence="3">Belongs to the SecY/SEC61-alpha family.</text>
</comment>
<feature type="chain" id="PRO_0000131780" description="Protein transport protein SEC61 subunit alpha">
    <location>
        <begin position="1"/>
        <end position="480"/>
    </location>
</feature>
<feature type="topological domain" description="Cytoplasmic" evidence="2">
    <location>
        <begin position="1"/>
        <end position="32"/>
    </location>
</feature>
<feature type="transmembrane region" description="Helical" evidence="2">
    <location>
        <begin position="33"/>
        <end position="53"/>
    </location>
</feature>
<feature type="topological domain" description="Lumenal" evidence="2">
    <location>
        <begin position="54"/>
        <end position="75"/>
    </location>
</feature>
<feature type="transmembrane region" description="Helical" evidence="2">
    <location>
        <begin position="76"/>
        <end position="96"/>
    </location>
</feature>
<feature type="topological domain" description="Cytoplasmic" evidence="2">
    <location>
        <begin position="97"/>
        <end position="118"/>
    </location>
</feature>
<feature type="transmembrane region" description="Helical" evidence="2">
    <location>
        <begin position="119"/>
        <end position="139"/>
    </location>
</feature>
<feature type="topological domain" description="Lumenal" evidence="2">
    <location>
        <begin position="140"/>
        <end position="145"/>
    </location>
</feature>
<feature type="transmembrane region" description="Helical" evidence="2">
    <location>
        <begin position="146"/>
        <end position="166"/>
    </location>
</feature>
<feature type="topological domain" description="Cytoplasmic" evidence="2">
    <location>
        <begin position="167"/>
        <end position="245"/>
    </location>
</feature>
<feature type="transmembrane region" description="Helical" evidence="2">
    <location>
        <begin position="246"/>
        <end position="266"/>
    </location>
</feature>
<feature type="topological domain" description="Lumenal" evidence="2">
    <location>
        <begin position="267"/>
        <end position="362"/>
    </location>
</feature>
<feature type="transmembrane region" description="Helical" evidence="2">
    <location>
        <begin position="363"/>
        <end position="383"/>
    </location>
</feature>
<feature type="topological domain" description="Cytoplasmic" evidence="2">
    <location>
        <begin position="384"/>
        <end position="416"/>
    </location>
</feature>
<feature type="transmembrane region" description="Helical" evidence="2">
    <location>
        <begin position="417"/>
        <end position="435"/>
    </location>
</feature>
<feature type="topological domain" description="Lumenal" evidence="2">
    <location>
        <begin position="436"/>
        <end position="441"/>
    </location>
</feature>
<feature type="transmembrane region" description="Helical" evidence="2">
    <location>
        <begin position="442"/>
        <end position="459"/>
    </location>
</feature>
<feature type="topological domain" description="Cytoplasmic" evidence="2">
    <location>
        <begin position="460"/>
        <end position="480"/>
    </location>
</feature>
<proteinExistence type="inferred from homology"/>
<accession>Q752H7</accession>
<reference key="1">
    <citation type="journal article" date="2004" name="Science">
        <title>The Ashbya gossypii genome as a tool for mapping the ancient Saccharomyces cerevisiae genome.</title>
        <authorList>
            <person name="Dietrich F.S."/>
            <person name="Voegeli S."/>
            <person name="Brachat S."/>
            <person name="Lerch A."/>
            <person name="Gates K."/>
            <person name="Steiner S."/>
            <person name="Mohr C."/>
            <person name="Poehlmann R."/>
            <person name="Luedi P."/>
            <person name="Choi S."/>
            <person name="Wing R.A."/>
            <person name="Flavier A."/>
            <person name="Gaffney T.D."/>
            <person name="Philippsen P."/>
        </authorList>
    </citation>
    <scope>NUCLEOTIDE SEQUENCE [LARGE SCALE GENOMIC DNA]</scope>
    <source>
        <strain>ATCC 10895 / CBS 109.51 / FGSC 9923 / NRRL Y-1056</strain>
    </source>
</reference>
<reference key="2">
    <citation type="journal article" date="2013" name="G3 (Bethesda)">
        <title>Genomes of Ashbya fungi isolated from insects reveal four mating-type loci, numerous translocations, lack of transposons, and distinct gene duplications.</title>
        <authorList>
            <person name="Dietrich F.S."/>
            <person name="Voegeli S."/>
            <person name="Kuo S."/>
            <person name="Philippsen P."/>
        </authorList>
    </citation>
    <scope>GENOME REANNOTATION</scope>
    <source>
        <strain>ATCC 10895 / CBS 109.51 / FGSC 9923 / NRRL Y-1056</strain>
    </source>
</reference>
<evidence type="ECO:0000250" key="1"/>
<evidence type="ECO:0000255" key="2"/>
<evidence type="ECO:0000305" key="3"/>